<feature type="chain" id="PRO_0000068412" description="Antitoxin PemI">
    <location>
        <begin position="1"/>
        <end position="85"/>
    </location>
</feature>
<feature type="domain" description="SpoVT-AbrB" evidence="2">
    <location>
        <begin position="4"/>
        <end position="49"/>
    </location>
</feature>
<accession>P13975</accession>
<name>PEMI_ECOLX</name>
<geneLocation type="plasmid">
    <name>IncFII R100</name>
    <name>NR1</name>
</geneLocation>
<geneLocation type="plasmid">
    <name>IncFII R1</name>
</geneLocation>
<sequence>MHTTRLKRVGGSVMLTVPPALLNALSLGTDNEVGMVIDNGRLIVEPYRRPQYSLAELLAQCDPNAEISAEEREWLDAPATGQEEI</sequence>
<gene>
    <name type="primary">pemI</name>
</gene>
<reference key="1">
    <citation type="journal article" date="1986" name="Adv. Biophys.">
        <title>DNA replication of the resistance plasmid R100 and its control.</title>
        <authorList>
            <person name="Ohtsubo H."/>
            <person name="Ryder T.B."/>
            <person name="Maeda Y."/>
            <person name="Armstrong K."/>
            <person name="Ohtsubo E."/>
        </authorList>
    </citation>
    <scope>NUCLEOTIDE SEQUENCE [GENOMIC DNA]</scope>
    <source>
        <plasmid>IncFII R100 (NR1)</plasmid>
    </source>
</reference>
<reference key="2">
    <citation type="journal article" date="1987" name="Mol. Gen. Genet.">
        <title>Identification of components of a new stability system of plasmid R1, ParD, that is close to the origin of replication of this plasmid.</title>
        <authorList>
            <person name="Bravo A."/>
            <person name="de Torrontegui G."/>
            <person name="Diaz R."/>
        </authorList>
    </citation>
    <scope>NUCLEOTIDE SEQUENCE [GENOMIC DNA]</scope>
    <source>
        <plasmid>IncFII R1</plasmid>
    </source>
</reference>
<reference key="3">
    <citation type="journal article" date="1988" name="J. Bacteriol.">
        <title>Two genes, pemK and pemI, responsible for stable maintenance of resistance plasmid R100.</title>
        <authorList>
            <person name="Tsuchimoto S."/>
            <person name="Ohtsubo H."/>
            <person name="Ohtsubo E."/>
        </authorList>
    </citation>
    <scope>FUNCTION</scope>
    <scope>DNA-BINDING</scope>
</reference>
<reference key="4">
    <citation type="journal article" date="1993" name="Mol. Gen. Genet.">
        <title>Autoregulation by cooperative binding of the PemI and PemK proteins to the promoter region of the pem operon.</title>
        <authorList>
            <person name="Tsuchimoto S."/>
            <person name="Ohtsubo E."/>
        </authorList>
    </citation>
    <scope>CHARACTERIZATION</scope>
</reference>
<keyword id="KW-0238">DNA-binding</keyword>
<keyword id="KW-0614">Plasmid</keyword>
<keyword id="KW-1277">Toxin-antitoxin system</keyword>
<dbReference type="EMBL" id="M26840">
    <property type="protein sequence ID" value="AAA26069.1"/>
    <property type="molecule type" value="Genomic_DNA"/>
</dbReference>
<dbReference type="EMBL" id="X06240">
    <property type="protein sequence ID" value="CAA29584.1"/>
    <property type="molecule type" value="Genomic_DNA"/>
</dbReference>
<dbReference type="PIR" id="I64783">
    <property type="entry name" value="I64783"/>
</dbReference>
<dbReference type="RefSeq" id="NP_862962.1">
    <property type="nucleotide sequence ID" value="NC_004998.1"/>
</dbReference>
<dbReference type="RefSeq" id="NP_957646.1">
    <property type="nucleotide sequence ID" value="NC_005327.1"/>
</dbReference>
<dbReference type="RefSeq" id="WP_000557619.1">
    <property type="nucleotide sequence ID" value="NZ_WXZA01000057.1"/>
</dbReference>
<dbReference type="RefSeq" id="YP_001096514.1">
    <property type="nucleotide sequence ID" value="NC_009133.1"/>
</dbReference>
<dbReference type="RefSeq" id="YP_001816576.1">
    <property type="nucleotide sequence ID" value="NC_010558.1"/>
</dbReference>
<dbReference type="RefSeq" id="YP_002527568.1">
    <property type="nucleotide sequence ID" value="NC_011964.1"/>
</dbReference>
<dbReference type="RefSeq" id="YP_003108264.1">
    <property type="nucleotide sequence ID" value="NC_013121.1"/>
</dbReference>
<dbReference type="RefSeq" id="YP_003108328.1">
    <property type="nucleotide sequence ID" value="NC_013122.1"/>
</dbReference>
<dbReference type="RefSeq" id="YP_003829175.1">
    <property type="nucleotide sequence ID" value="NC_014384.1"/>
</dbReference>
<dbReference type="RefSeq" id="YP_003829285.1">
    <property type="nucleotide sequence ID" value="NC_014385.1"/>
</dbReference>
<dbReference type="RefSeq" id="YP_006953466.1">
    <property type="nucleotide sequence ID" value="NC_019073.1"/>
</dbReference>
<dbReference type="RefSeq" id="YP_006953884.1">
    <property type="nucleotide sequence ID" value="NC_019089.1"/>
</dbReference>
<dbReference type="RefSeq" id="YP_006953889.1">
    <property type="nucleotide sequence ID" value="NC_019090.1"/>
</dbReference>
<dbReference type="RefSeq" id="YP_006954226.1">
    <property type="nucleotide sequence ID" value="NC_019095.1"/>
</dbReference>
<dbReference type="RefSeq" id="YP_007447504.1">
    <property type="nucleotide sequence ID" value="NC_020278.2"/>
</dbReference>
<dbReference type="RefSeq" id="YP_008826479.1">
    <property type="nucleotide sequence ID" value="NC_022885.1"/>
</dbReference>
<dbReference type="RefSeq" id="YP_009068666.1">
    <property type="nucleotide sequence ID" value="NC_025141.1"/>
</dbReference>
<dbReference type="BMRB" id="P13975"/>
<dbReference type="SMR" id="P13975"/>
<dbReference type="OMA" id="HRRPQYS"/>
<dbReference type="GO" id="GO:0003677">
    <property type="term" value="F:DNA binding"/>
    <property type="evidence" value="ECO:0007669"/>
    <property type="project" value="UniProtKB-KW"/>
</dbReference>
<dbReference type="GO" id="GO:0097351">
    <property type="term" value="F:toxin sequestering activity"/>
    <property type="evidence" value="ECO:0007669"/>
    <property type="project" value="InterPro"/>
</dbReference>
<dbReference type="Gene3D" id="2.10.260.10">
    <property type="match status" value="1"/>
</dbReference>
<dbReference type="InterPro" id="IPR039052">
    <property type="entry name" value="Antitox_PemI-like"/>
</dbReference>
<dbReference type="InterPro" id="IPR007159">
    <property type="entry name" value="SpoVT-AbrB_dom"/>
</dbReference>
<dbReference type="InterPro" id="IPR037914">
    <property type="entry name" value="SpoVT-AbrB_sf"/>
</dbReference>
<dbReference type="PANTHER" id="PTHR40516">
    <property type="entry name" value="ANTITOXIN CHPS-RELATED"/>
    <property type="match status" value="1"/>
</dbReference>
<dbReference type="PANTHER" id="PTHR40516:SF1">
    <property type="entry name" value="ANTITOXIN CHPS-RELATED"/>
    <property type="match status" value="1"/>
</dbReference>
<dbReference type="Pfam" id="PF04014">
    <property type="entry name" value="MazE_antitoxin"/>
    <property type="match status" value="1"/>
</dbReference>
<dbReference type="SMART" id="SM00966">
    <property type="entry name" value="SpoVT_AbrB"/>
    <property type="match status" value="1"/>
</dbReference>
<dbReference type="SUPFAM" id="SSF89447">
    <property type="entry name" value="AbrB/MazE/MraZ-like"/>
    <property type="match status" value="1"/>
</dbReference>
<dbReference type="PROSITE" id="PS51740">
    <property type="entry name" value="SPOVT_ABRB"/>
    <property type="match status" value="1"/>
</dbReference>
<comment type="function">
    <text evidence="3 4 5">Antitoxin component of a type II toxin-antitoxin (TA) system. Labile antitoxin that binds to its cognate PemK endoribonuclease toxin and neutralizes its activity. Responsible for the stable maintenance of the plasmid during cell division. Both PemI and PemK proteins bind to the promoter region of the pem operon to autoregulate their synthesis.</text>
</comment>
<comment type="subunit">
    <text evidence="1">Forms a complex with cognate toxin PemK.</text>
</comment>
<comment type="similarity">
    <text evidence="6">Belongs to the PemI family.</text>
</comment>
<organism>
    <name type="scientific">Escherichia coli</name>
    <dbReference type="NCBI Taxonomy" id="562"/>
    <lineage>
        <taxon>Bacteria</taxon>
        <taxon>Pseudomonadati</taxon>
        <taxon>Pseudomonadota</taxon>
        <taxon>Gammaproteobacteria</taxon>
        <taxon>Enterobacterales</taxon>
        <taxon>Enterobacteriaceae</taxon>
        <taxon>Escherichia</taxon>
    </lineage>
</organism>
<evidence type="ECO:0000250" key="1">
    <source>
        <dbReference type="UniProtKB" id="P0AE72"/>
    </source>
</evidence>
<evidence type="ECO:0000255" key="2">
    <source>
        <dbReference type="PROSITE-ProRule" id="PRU01076"/>
    </source>
</evidence>
<evidence type="ECO:0000269" key="3">
    <source>
    </source>
</evidence>
<evidence type="ECO:0000269" key="4">
    <source>
    </source>
</evidence>
<evidence type="ECO:0000269" key="5">
    <source>
    </source>
</evidence>
<evidence type="ECO:0000305" key="6"/>
<proteinExistence type="evidence at protein level"/>
<protein>
    <recommendedName>
        <fullName>Antitoxin PemI</fullName>
    </recommendedName>
</protein>